<dbReference type="EC" id="2.1.1.242" evidence="1"/>
<dbReference type="EMBL" id="CP001020">
    <property type="protein sequence ID" value="ACJ19493.1"/>
    <property type="molecule type" value="Genomic_DNA"/>
</dbReference>
<dbReference type="RefSeq" id="WP_005770277.1">
    <property type="nucleotide sequence ID" value="NC_011528.1"/>
</dbReference>
<dbReference type="SMR" id="B6J489"/>
<dbReference type="KEGG" id="cbc:CbuK_0176"/>
<dbReference type="HOGENOM" id="CLU_076324_0_1_6"/>
<dbReference type="GO" id="GO:0005737">
    <property type="term" value="C:cytoplasm"/>
    <property type="evidence" value="ECO:0007669"/>
    <property type="project" value="UniProtKB-SubCell"/>
</dbReference>
<dbReference type="GO" id="GO:0008990">
    <property type="term" value="F:rRNA (guanine-N2-)-methyltransferase activity"/>
    <property type="evidence" value="ECO:0007669"/>
    <property type="project" value="UniProtKB-UniRule"/>
</dbReference>
<dbReference type="CDD" id="cd02440">
    <property type="entry name" value="AdoMet_MTases"/>
    <property type="match status" value="1"/>
</dbReference>
<dbReference type="Gene3D" id="3.40.50.150">
    <property type="entry name" value="Vaccinia Virus protein VP39"/>
    <property type="match status" value="1"/>
</dbReference>
<dbReference type="HAMAP" id="MF_01523">
    <property type="entry name" value="16SrRNA_methyltr_J"/>
    <property type="match status" value="1"/>
</dbReference>
<dbReference type="InterPro" id="IPR007536">
    <property type="entry name" value="16SrRNA_methylTrfase_J"/>
</dbReference>
<dbReference type="InterPro" id="IPR029063">
    <property type="entry name" value="SAM-dependent_MTases_sf"/>
</dbReference>
<dbReference type="PANTHER" id="PTHR36112">
    <property type="entry name" value="RIBOSOMAL RNA SMALL SUBUNIT METHYLTRANSFERASE J"/>
    <property type="match status" value="1"/>
</dbReference>
<dbReference type="PANTHER" id="PTHR36112:SF1">
    <property type="entry name" value="RIBOSOMAL RNA SMALL SUBUNIT METHYLTRANSFERASE J"/>
    <property type="match status" value="1"/>
</dbReference>
<dbReference type="Pfam" id="PF04445">
    <property type="entry name" value="SAM_MT"/>
    <property type="match status" value="1"/>
</dbReference>
<dbReference type="SUPFAM" id="SSF53335">
    <property type="entry name" value="S-adenosyl-L-methionine-dependent methyltransferases"/>
    <property type="match status" value="1"/>
</dbReference>
<comment type="function">
    <text evidence="1">Specifically methylates the guanosine in position 1516 of 16S rRNA.</text>
</comment>
<comment type="catalytic activity">
    <reaction evidence="1">
        <text>guanosine(1516) in 16S rRNA + S-adenosyl-L-methionine = N(2)-methylguanosine(1516) in 16S rRNA + S-adenosyl-L-homocysteine + H(+)</text>
        <dbReference type="Rhea" id="RHEA:43220"/>
        <dbReference type="Rhea" id="RHEA-COMP:10412"/>
        <dbReference type="Rhea" id="RHEA-COMP:10413"/>
        <dbReference type="ChEBI" id="CHEBI:15378"/>
        <dbReference type="ChEBI" id="CHEBI:57856"/>
        <dbReference type="ChEBI" id="CHEBI:59789"/>
        <dbReference type="ChEBI" id="CHEBI:74269"/>
        <dbReference type="ChEBI" id="CHEBI:74481"/>
        <dbReference type="EC" id="2.1.1.242"/>
    </reaction>
</comment>
<comment type="subcellular location">
    <subcellularLocation>
        <location evidence="1">Cytoplasm</location>
    </subcellularLocation>
</comment>
<comment type="similarity">
    <text evidence="1">Belongs to the methyltransferase superfamily. RsmJ family.</text>
</comment>
<protein>
    <recommendedName>
        <fullName evidence="1">Ribosomal RNA small subunit methyltransferase J</fullName>
        <ecNumber evidence="1">2.1.1.242</ecNumber>
    </recommendedName>
    <alternativeName>
        <fullName evidence="1">16S rRNA m2G1516 methyltransferase</fullName>
    </alternativeName>
    <alternativeName>
        <fullName evidence="1">rRNA (guanine-N(2)-)-methyltransferase</fullName>
    </alternativeName>
</protein>
<organism>
    <name type="scientific">Coxiella burnetii (strain CbuK_Q154)</name>
    <name type="common">Coxiella burnetii (strain Q154)</name>
    <dbReference type="NCBI Taxonomy" id="434924"/>
    <lineage>
        <taxon>Bacteria</taxon>
        <taxon>Pseudomonadati</taxon>
        <taxon>Pseudomonadota</taxon>
        <taxon>Gammaproteobacteria</taxon>
        <taxon>Legionellales</taxon>
        <taxon>Coxiellaceae</taxon>
        <taxon>Coxiella</taxon>
    </lineage>
</organism>
<keyword id="KW-0963">Cytoplasm</keyword>
<keyword id="KW-0489">Methyltransferase</keyword>
<keyword id="KW-0698">rRNA processing</keyword>
<keyword id="KW-0949">S-adenosyl-L-methionine</keyword>
<keyword id="KW-0808">Transferase</keyword>
<sequence length="254" mass="28311">MNDTLAITYSTPARLSEAEKLARQMKLPLVSLNSTDYSFLLVFTPAHLELRSTGTKAPGPLYVDFLKGATAHRRLFGGGRSQLIVRAVGLKSHPHPTILDLTAGLGRDAFVLANLGCDVLMIERNPVIALLLRDGLERAQSVEWFKSLKLELIEIDAQIYLSTLKKQFDVIYMDPMYPIRKKSALVKKEMRILRRLVGADDDAPQLLALALKKAKHRVVIKRPRLSNPLPGPAPDVVYEGKSSRFDVYLLKPSS</sequence>
<reference key="1">
    <citation type="journal article" date="2009" name="Infect. Immun.">
        <title>Comparative genomics reveal extensive transposon-mediated genomic plasticity and diversity among potential effector proteins within the genus Coxiella.</title>
        <authorList>
            <person name="Beare P.A."/>
            <person name="Unsworth N."/>
            <person name="Andoh M."/>
            <person name="Voth D.E."/>
            <person name="Omsland A."/>
            <person name="Gilk S.D."/>
            <person name="Williams K.P."/>
            <person name="Sobral B.W."/>
            <person name="Kupko J.J. III"/>
            <person name="Porcella S.F."/>
            <person name="Samuel J.E."/>
            <person name="Heinzen R.A."/>
        </authorList>
    </citation>
    <scope>NUCLEOTIDE SEQUENCE [LARGE SCALE GENOMIC DNA]</scope>
    <source>
        <strain>CbuK_Q154</strain>
    </source>
</reference>
<evidence type="ECO:0000255" key="1">
    <source>
        <dbReference type="HAMAP-Rule" id="MF_01523"/>
    </source>
</evidence>
<gene>
    <name evidence="1" type="primary">rsmJ</name>
    <name type="ordered locus">CbuK_0176</name>
</gene>
<feature type="chain" id="PRO_1000198489" description="Ribosomal RNA small subunit methyltransferase J">
    <location>
        <begin position="1"/>
        <end position="254"/>
    </location>
</feature>
<feature type="binding site" evidence="1">
    <location>
        <begin position="107"/>
        <end position="108"/>
    </location>
    <ligand>
        <name>S-adenosyl-L-methionine</name>
        <dbReference type="ChEBI" id="CHEBI:59789"/>
    </ligand>
</feature>
<feature type="binding site" evidence="1">
    <location>
        <begin position="123"/>
        <end position="124"/>
    </location>
    <ligand>
        <name>S-adenosyl-L-methionine</name>
        <dbReference type="ChEBI" id="CHEBI:59789"/>
    </ligand>
</feature>
<feature type="binding site" evidence="1">
    <location>
        <position position="174"/>
    </location>
    <ligand>
        <name>S-adenosyl-L-methionine</name>
        <dbReference type="ChEBI" id="CHEBI:59789"/>
    </ligand>
</feature>
<proteinExistence type="inferred from homology"/>
<name>RSMJ_COXB1</name>
<accession>B6J489</accession>